<comment type="function">
    <text evidence="1">Positively regulates the transcription of the maltose regulon whose gene products are responsible for uptake and catabolism of malto-oligosaccharides. Specifically binds to the promoter region of its target genes, recognizing a short DNA motif called the MalT box.</text>
</comment>
<comment type="activity regulation">
    <text evidence="1">Activated by ATP and maltotriose, which are both required for DNA binding.</text>
</comment>
<comment type="subunit">
    <text evidence="1">Monomer in solution. Oligomerizes to an active state in the presence of the positive effectors ATP and maltotriose.</text>
</comment>
<comment type="similarity">
    <text evidence="1">Belongs to the MalT family.</text>
</comment>
<feature type="chain" id="PRO_1000085786" description="HTH-type transcriptional regulator MalT">
    <location>
        <begin position="1"/>
        <end position="903"/>
    </location>
</feature>
<feature type="domain" description="HTH luxR-type" evidence="1">
    <location>
        <begin position="832"/>
        <end position="897"/>
    </location>
</feature>
<feature type="DNA-binding region" description="H-T-H motif" evidence="1">
    <location>
        <begin position="856"/>
        <end position="875"/>
    </location>
</feature>
<feature type="binding site" evidence="1">
    <location>
        <begin position="39"/>
        <end position="46"/>
    </location>
    <ligand>
        <name>ATP</name>
        <dbReference type="ChEBI" id="CHEBI:30616"/>
    </ligand>
</feature>
<organism>
    <name type="scientific">Yersinia pestis (strain Pestoides F)</name>
    <dbReference type="NCBI Taxonomy" id="386656"/>
    <lineage>
        <taxon>Bacteria</taxon>
        <taxon>Pseudomonadati</taxon>
        <taxon>Pseudomonadota</taxon>
        <taxon>Gammaproteobacteria</taxon>
        <taxon>Enterobacterales</taxon>
        <taxon>Yersiniaceae</taxon>
        <taxon>Yersinia</taxon>
    </lineage>
</organism>
<keyword id="KW-0010">Activator</keyword>
<keyword id="KW-0067">ATP-binding</keyword>
<keyword id="KW-0119">Carbohydrate metabolism</keyword>
<keyword id="KW-0238">DNA-binding</keyword>
<keyword id="KW-0547">Nucleotide-binding</keyword>
<keyword id="KW-0804">Transcription</keyword>
<keyword id="KW-0805">Transcription regulation</keyword>
<accession>A4TGR4</accession>
<evidence type="ECO:0000255" key="1">
    <source>
        <dbReference type="HAMAP-Rule" id="MF_01247"/>
    </source>
</evidence>
<protein>
    <recommendedName>
        <fullName evidence="1">HTH-type transcriptional regulator MalT</fullName>
    </recommendedName>
    <alternativeName>
        <fullName evidence="1">ATP-dependent transcriptional activator MalT</fullName>
    </alternativeName>
</protein>
<proteinExistence type="inferred from homology"/>
<dbReference type="EMBL" id="CP000668">
    <property type="protein sequence ID" value="ABP38477.1"/>
    <property type="molecule type" value="Genomic_DNA"/>
</dbReference>
<dbReference type="RefSeq" id="WP_002208926.1">
    <property type="nucleotide sequence ID" value="NZ_CP009715.1"/>
</dbReference>
<dbReference type="SMR" id="A4TGR4"/>
<dbReference type="GeneID" id="57974475"/>
<dbReference type="KEGG" id="ypp:YPDSF_0051"/>
<dbReference type="PATRIC" id="fig|386656.14.peg.519"/>
<dbReference type="GO" id="GO:0005524">
    <property type="term" value="F:ATP binding"/>
    <property type="evidence" value="ECO:0007669"/>
    <property type="project" value="UniProtKB-UniRule"/>
</dbReference>
<dbReference type="GO" id="GO:0003677">
    <property type="term" value="F:DNA binding"/>
    <property type="evidence" value="ECO:0007669"/>
    <property type="project" value="UniProtKB-KW"/>
</dbReference>
<dbReference type="GO" id="GO:0003700">
    <property type="term" value="F:DNA-binding transcription factor activity"/>
    <property type="evidence" value="ECO:0007669"/>
    <property type="project" value="UniProtKB-UniRule"/>
</dbReference>
<dbReference type="GO" id="GO:0045913">
    <property type="term" value="P:positive regulation of carbohydrate metabolic process"/>
    <property type="evidence" value="ECO:0007669"/>
    <property type="project" value="UniProtKB-UniRule"/>
</dbReference>
<dbReference type="GO" id="GO:0045893">
    <property type="term" value="P:positive regulation of DNA-templated transcription"/>
    <property type="evidence" value="ECO:0007669"/>
    <property type="project" value="UniProtKB-UniRule"/>
</dbReference>
<dbReference type="CDD" id="cd06170">
    <property type="entry name" value="LuxR_C_like"/>
    <property type="match status" value="1"/>
</dbReference>
<dbReference type="FunFam" id="1.10.10.10:FF:000115">
    <property type="entry name" value="HTH-type transcriptional regulator MalT"/>
    <property type="match status" value="1"/>
</dbReference>
<dbReference type="Gene3D" id="1.25.40.10">
    <property type="entry name" value="Tetratricopeptide repeat domain"/>
    <property type="match status" value="1"/>
</dbReference>
<dbReference type="Gene3D" id="1.10.10.10">
    <property type="entry name" value="Winged helix-like DNA-binding domain superfamily/Winged helix DNA-binding domain"/>
    <property type="match status" value="1"/>
</dbReference>
<dbReference type="HAMAP" id="MF_01247">
    <property type="entry name" value="HTH_type_MalT"/>
    <property type="match status" value="1"/>
</dbReference>
<dbReference type="InterPro" id="IPR027417">
    <property type="entry name" value="P-loop_NTPase"/>
</dbReference>
<dbReference type="InterPro" id="IPR016032">
    <property type="entry name" value="Sig_transdc_resp-reg_C-effctor"/>
</dbReference>
<dbReference type="InterPro" id="IPR011990">
    <property type="entry name" value="TPR-like_helical_dom_sf"/>
</dbReference>
<dbReference type="InterPro" id="IPR041617">
    <property type="entry name" value="TPR_MalT"/>
</dbReference>
<dbReference type="InterPro" id="IPR023768">
    <property type="entry name" value="Tscrpt_reg_HTH_MalT"/>
</dbReference>
<dbReference type="InterPro" id="IPR000792">
    <property type="entry name" value="Tscrpt_reg_LuxR_C"/>
</dbReference>
<dbReference type="InterPro" id="IPR036388">
    <property type="entry name" value="WH-like_DNA-bd_sf"/>
</dbReference>
<dbReference type="NCBIfam" id="NF003420">
    <property type="entry name" value="PRK04841.1"/>
    <property type="match status" value="1"/>
</dbReference>
<dbReference type="PANTHER" id="PTHR44688">
    <property type="entry name" value="DNA-BINDING TRANSCRIPTIONAL ACTIVATOR DEVR_DOSR"/>
    <property type="match status" value="1"/>
</dbReference>
<dbReference type="PANTHER" id="PTHR44688:SF16">
    <property type="entry name" value="DNA-BINDING TRANSCRIPTIONAL ACTIVATOR DEVR_DOSR"/>
    <property type="match status" value="1"/>
</dbReference>
<dbReference type="Pfam" id="PF00196">
    <property type="entry name" value="GerE"/>
    <property type="match status" value="1"/>
</dbReference>
<dbReference type="Pfam" id="PF17874">
    <property type="entry name" value="TPR_MalT"/>
    <property type="match status" value="1"/>
</dbReference>
<dbReference type="PRINTS" id="PR00038">
    <property type="entry name" value="HTHLUXR"/>
</dbReference>
<dbReference type="SMART" id="SM00421">
    <property type="entry name" value="HTH_LUXR"/>
    <property type="match status" value="1"/>
</dbReference>
<dbReference type="SUPFAM" id="SSF46894">
    <property type="entry name" value="C-terminal effector domain of the bipartite response regulators"/>
    <property type="match status" value="1"/>
</dbReference>
<dbReference type="SUPFAM" id="SSF52540">
    <property type="entry name" value="P-loop containing nucleoside triphosphate hydrolases"/>
    <property type="match status" value="1"/>
</dbReference>
<dbReference type="SUPFAM" id="SSF48452">
    <property type="entry name" value="TPR-like"/>
    <property type="match status" value="1"/>
</dbReference>
<dbReference type="PROSITE" id="PS00622">
    <property type="entry name" value="HTH_LUXR_1"/>
    <property type="match status" value="1"/>
</dbReference>
<dbReference type="PROSITE" id="PS50043">
    <property type="entry name" value="HTH_LUXR_2"/>
    <property type="match status" value="1"/>
</dbReference>
<gene>
    <name evidence="1" type="primary">malT</name>
    <name type="ordered locus">YPDSF_0051</name>
</gene>
<sequence length="903" mass="103165">MLIPSKLSRPVRLQNTVVRDRLLVKLSSAANYRLTLINCPAGYGKTTLIAQWAADQSNLGWYSLDESDNQSERFATYLIAAIQLATGGHCSKSEALSQKHQYANLSALFSQLFIELSNWDGPLYLVIDDYHLITNDAIHEAMRFFLRHQPENLTLIILSRTLPSLGIANLRVRDQLLELGMQQLAFNHHEAQQFFECRLSSPLEQGDSSRLCDEVEGWVTALQLIALSSRQPNSSAQKSAKRLAGLNASHLSDYLVDEVLDQVDSKARAFLLRCSVLRSMNDALIVRLTGEDNGQQLLEELERQGLFIHRMDDSAEWFCFHPLFATFLRQRCQWELALELPELHHAAAEGWMALGYPAEAIHHALAAGDVGMLRDILLQHAWSLFHHSELALLEQCLTALPYPLLVQNPELALLQAWLAQSQHRYSEVNTLLEQAELAMQERKIPVDEILRAEFGALRAQVAINAGKPDEAEKLATDALKYLPMAHYYSRIVATSVTGEVHHCKGELARALPMMQQTEQMARRHEAYHYALWALLQQSEILIAQGFLQAAYETQEKAFELIREQHLEQLPMHEFLLRIRSQVLWSWSRLDEAEEAARKGVEILANYQPQQQLQCLAMLAKCSLARGDLDNANVYIQRCEALQHGSQYHLDWITNADKPRVIHWQMTGDKVAAASWLRQTEKPGMADNHFLQGQWRNIARVQIILGRFDEAEVVLDELNENARRLRLTSDLNRNLLLSNTLYWQTERKGEAQKALIESLTLANRTGFISHFVIEGEAMAQQLRQLIQLNALPELEQHRAQRILKDINQHHRHKFAHFDEIFVDKLLTHPQVPELIRTSPLTQREWQVLGLIYSGYSNDQIANELDVAATTIKTHIRNLYQKLGVAHRQEAVQQAQRLLQMMGYV</sequence>
<reference key="1">
    <citation type="submission" date="2007-02" db="EMBL/GenBank/DDBJ databases">
        <title>Complete sequence of chromosome of Yersinia pestis Pestoides F.</title>
        <authorList>
            <consortium name="US DOE Joint Genome Institute"/>
            <person name="Copeland A."/>
            <person name="Lucas S."/>
            <person name="Lapidus A."/>
            <person name="Barry K."/>
            <person name="Detter J.C."/>
            <person name="Glavina del Rio T."/>
            <person name="Hammon N."/>
            <person name="Israni S."/>
            <person name="Dalin E."/>
            <person name="Tice H."/>
            <person name="Pitluck S."/>
            <person name="Di Bartolo G."/>
            <person name="Chain P."/>
            <person name="Malfatti S."/>
            <person name="Shin M."/>
            <person name="Vergez L."/>
            <person name="Schmutz J."/>
            <person name="Larimer F."/>
            <person name="Land M."/>
            <person name="Hauser L."/>
            <person name="Worsham P."/>
            <person name="Chu M."/>
            <person name="Bearden S."/>
            <person name="Garcia E."/>
            <person name="Richardson P."/>
        </authorList>
    </citation>
    <scope>NUCLEOTIDE SEQUENCE [LARGE SCALE GENOMIC DNA]</scope>
    <source>
        <strain>Pestoides F</strain>
    </source>
</reference>
<name>MALT_YERPP</name>